<organism>
    <name type="scientific">Salmonella typhimurium (strain LT2 / SGSC1412 / ATCC 700720)</name>
    <dbReference type="NCBI Taxonomy" id="99287"/>
    <lineage>
        <taxon>Bacteria</taxon>
        <taxon>Pseudomonadati</taxon>
        <taxon>Pseudomonadota</taxon>
        <taxon>Gammaproteobacteria</taxon>
        <taxon>Enterobacterales</taxon>
        <taxon>Enterobacteriaceae</taxon>
        <taxon>Salmonella</taxon>
    </lineage>
</organism>
<name>ZAPD_SALTY</name>
<accession>P67693</accession>
<accession>Q8XEX8</accession>
<feature type="chain" id="PRO_0000211678" description="Cell division protein ZapD">
    <location>
        <begin position="1"/>
        <end position="247"/>
    </location>
</feature>
<feature type="strand" evidence="2">
    <location>
        <begin position="4"/>
        <end position="12"/>
    </location>
</feature>
<feature type="helix" evidence="2">
    <location>
        <begin position="13"/>
        <end position="30"/>
    </location>
</feature>
<feature type="helix" evidence="2">
    <location>
        <begin position="37"/>
        <end position="53"/>
    </location>
</feature>
<feature type="helix" evidence="2">
    <location>
        <begin position="54"/>
        <end position="56"/>
    </location>
</feature>
<feature type="helix" evidence="2">
    <location>
        <begin position="59"/>
        <end position="74"/>
    </location>
</feature>
<feature type="strand" evidence="2">
    <location>
        <begin position="77"/>
        <end position="79"/>
    </location>
</feature>
<feature type="helix" evidence="2">
    <location>
        <begin position="85"/>
        <end position="104"/>
    </location>
</feature>
<feature type="helix" evidence="2">
    <location>
        <begin position="110"/>
        <end position="114"/>
    </location>
</feature>
<feature type="helix" evidence="2">
    <location>
        <begin position="116"/>
        <end position="124"/>
    </location>
</feature>
<feature type="turn" evidence="2">
    <location>
        <begin position="133"/>
        <end position="135"/>
    </location>
</feature>
<feature type="helix" evidence="2">
    <location>
        <begin position="137"/>
        <end position="142"/>
    </location>
</feature>
<feature type="helix" evidence="2">
    <location>
        <begin position="147"/>
        <end position="159"/>
    </location>
</feature>
<feature type="helix" evidence="2">
    <location>
        <begin position="162"/>
        <end position="176"/>
    </location>
</feature>
<feature type="strand" evidence="2">
    <location>
        <begin position="182"/>
        <end position="187"/>
    </location>
</feature>
<feature type="strand" evidence="2">
    <location>
        <begin position="190"/>
        <end position="194"/>
    </location>
</feature>
<feature type="strand" evidence="2">
    <location>
        <begin position="199"/>
        <end position="206"/>
    </location>
</feature>
<feature type="helix" evidence="2">
    <location>
        <begin position="207"/>
        <end position="209"/>
    </location>
</feature>
<feature type="strand" evidence="2">
    <location>
        <begin position="211"/>
        <end position="230"/>
    </location>
</feature>
<feature type="turn" evidence="2">
    <location>
        <begin position="231"/>
        <end position="233"/>
    </location>
</feature>
<feature type="strand" evidence="2">
    <location>
        <begin position="238"/>
        <end position="246"/>
    </location>
</feature>
<proteinExistence type="evidence at protein level"/>
<comment type="function">
    <text evidence="1">Cell division factor that enhances FtsZ-ring assembly. Directly interacts with FtsZ and promotes bundling of FtsZ protofilaments, with a reduction in FtsZ GTPase activity.</text>
</comment>
<comment type="subunit">
    <text evidence="1">Interacts with FtsZ.</text>
</comment>
<comment type="subcellular location">
    <subcellularLocation>
        <location evidence="1">Cytoplasm</location>
    </subcellularLocation>
    <text evidence="1">Localizes to mid-cell in an FtsZ-dependent manner.</text>
</comment>
<comment type="similarity">
    <text evidence="1">Belongs to the ZapD family.</text>
</comment>
<dbReference type="EMBL" id="AE006468">
    <property type="protein sequence ID" value="AAL19103.1"/>
    <property type="molecule type" value="Genomic_DNA"/>
</dbReference>
<dbReference type="RefSeq" id="WP_000557441.1">
    <property type="nucleotide sequence ID" value="NC_003197.2"/>
</dbReference>
<dbReference type="PDB" id="5GNP">
    <property type="method" value="X-ray"/>
    <property type="resolution" value="2.80 A"/>
    <property type="chains" value="A=3-247"/>
</dbReference>
<dbReference type="PDBsum" id="5GNP"/>
<dbReference type="SMR" id="P67693"/>
<dbReference type="STRING" id="99287.STM0139"/>
<dbReference type="PaxDb" id="99287-STM0139"/>
<dbReference type="KEGG" id="stm:STM0139"/>
<dbReference type="PATRIC" id="fig|99287.12.peg.147"/>
<dbReference type="HOGENOM" id="CLU_076303_0_0_6"/>
<dbReference type="OMA" id="LPAYYAW"/>
<dbReference type="PhylomeDB" id="P67693"/>
<dbReference type="BioCyc" id="SENT99287:STM0139-MONOMER"/>
<dbReference type="Proteomes" id="UP000001014">
    <property type="component" value="Chromosome"/>
</dbReference>
<dbReference type="GO" id="GO:0032153">
    <property type="term" value="C:cell division site"/>
    <property type="evidence" value="ECO:0000318"/>
    <property type="project" value="GO_Central"/>
</dbReference>
<dbReference type="GO" id="GO:0005737">
    <property type="term" value="C:cytoplasm"/>
    <property type="evidence" value="ECO:0007669"/>
    <property type="project" value="UniProtKB-SubCell"/>
</dbReference>
<dbReference type="GO" id="GO:0000917">
    <property type="term" value="P:division septum assembly"/>
    <property type="evidence" value="ECO:0007669"/>
    <property type="project" value="UniProtKB-KW"/>
</dbReference>
<dbReference type="GO" id="GO:0043093">
    <property type="term" value="P:FtsZ-dependent cytokinesis"/>
    <property type="evidence" value="ECO:0000318"/>
    <property type="project" value="GO_Central"/>
</dbReference>
<dbReference type="FunFam" id="1.10.3900.10:FF:000001">
    <property type="entry name" value="Cell division protein ZapD"/>
    <property type="match status" value="1"/>
</dbReference>
<dbReference type="FunFam" id="2.60.440.10:FF:000001">
    <property type="entry name" value="Cell division protein ZapD"/>
    <property type="match status" value="1"/>
</dbReference>
<dbReference type="Gene3D" id="1.10.3900.10">
    <property type="entry name" value="YacF-like"/>
    <property type="match status" value="1"/>
</dbReference>
<dbReference type="Gene3D" id="2.60.440.10">
    <property type="entry name" value="YacF-like domains"/>
    <property type="match status" value="1"/>
</dbReference>
<dbReference type="HAMAP" id="MF_01092">
    <property type="entry name" value="ZapD"/>
    <property type="match status" value="1"/>
</dbReference>
<dbReference type="InterPro" id="IPR009777">
    <property type="entry name" value="ZapD"/>
</dbReference>
<dbReference type="InterPro" id="IPR027462">
    <property type="entry name" value="ZapD_C"/>
</dbReference>
<dbReference type="InterPro" id="IPR036268">
    <property type="entry name" value="ZapD_sf"/>
</dbReference>
<dbReference type="NCBIfam" id="NF003653">
    <property type="entry name" value="PRK05287.1-1"/>
    <property type="match status" value="1"/>
</dbReference>
<dbReference type="NCBIfam" id="NF003655">
    <property type="entry name" value="PRK05287.1-3"/>
    <property type="match status" value="1"/>
</dbReference>
<dbReference type="PANTHER" id="PTHR39455">
    <property type="entry name" value="CELL DIVISION PROTEIN ZAPD"/>
    <property type="match status" value="1"/>
</dbReference>
<dbReference type="PANTHER" id="PTHR39455:SF1">
    <property type="entry name" value="CELL DIVISION PROTEIN ZAPD"/>
    <property type="match status" value="1"/>
</dbReference>
<dbReference type="Pfam" id="PF07072">
    <property type="entry name" value="ZapD"/>
    <property type="match status" value="1"/>
</dbReference>
<dbReference type="SUPFAM" id="SSF160950">
    <property type="entry name" value="YacF-like"/>
    <property type="match status" value="1"/>
</dbReference>
<sequence>MHTQVLFEHPLNEKMRTWLRIEFLIQQLSINLPIADHAGALHFFRNISDLLDVFERGEVRTELLKELERQQRKLQAWVEVPGVDQDRIEALRQQLKSAGSVLISAPRIGQQLREDRLIALVRQRLSIPGGCCSFDLPTLHIWLHLQQAQRDAQIESWLASLNPLTQALTLVLDLIRNSAPFRKQTSLNGFYQDNGDDADLLRLMLTLDSQLYPQISGHKSRFAIRFMPLDSENGLVPERLDFELACC</sequence>
<reference key="1">
    <citation type="journal article" date="2001" name="Nature">
        <title>Complete genome sequence of Salmonella enterica serovar Typhimurium LT2.</title>
        <authorList>
            <person name="McClelland M."/>
            <person name="Sanderson K.E."/>
            <person name="Spieth J."/>
            <person name="Clifton S.W."/>
            <person name="Latreille P."/>
            <person name="Courtney L."/>
            <person name="Porwollik S."/>
            <person name="Ali J."/>
            <person name="Dante M."/>
            <person name="Du F."/>
            <person name="Hou S."/>
            <person name="Layman D."/>
            <person name="Leonard S."/>
            <person name="Nguyen C."/>
            <person name="Scott K."/>
            <person name="Holmes A."/>
            <person name="Grewal N."/>
            <person name="Mulvaney E."/>
            <person name="Ryan E."/>
            <person name="Sun H."/>
            <person name="Florea L."/>
            <person name="Miller W."/>
            <person name="Stoneking T."/>
            <person name="Nhan M."/>
            <person name="Waterston R."/>
            <person name="Wilson R.K."/>
        </authorList>
    </citation>
    <scope>NUCLEOTIDE SEQUENCE [LARGE SCALE GENOMIC DNA]</scope>
    <source>
        <strain>LT2 / SGSC1412 / ATCC 700720</strain>
    </source>
</reference>
<evidence type="ECO:0000255" key="1">
    <source>
        <dbReference type="HAMAP-Rule" id="MF_01092"/>
    </source>
</evidence>
<evidence type="ECO:0007829" key="2">
    <source>
        <dbReference type="PDB" id="5GNP"/>
    </source>
</evidence>
<protein>
    <recommendedName>
        <fullName evidence="1">Cell division protein ZapD</fullName>
    </recommendedName>
    <alternativeName>
        <fullName evidence="1">Z ring-associated protein D</fullName>
    </alternativeName>
</protein>
<gene>
    <name evidence="1" type="primary">zapD</name>
    <name type="ordered locus">STM0139</name>
</gene>
<keyword id="KW-0002">3D-structure</keyword>
<keyword id="KW-0131">Cell cycle</keyword>
<keyword id="KW-0132">Cell division</keyword>
<keyword id="KW-0963">Cytoplasm</keyword>
<keyword id="KW-1185">Reference proteome</keyword>
<keyword id="KW-0717">Septation</keyword>